<name>SEY1_KOMPG</name>
<accession>C4R432</accession>
<dbReference type="EC" id="3.6.5.-" evidence="1"/>
<dbReference type="EMBL" id="FN392321">
    <property type="protein sequence ID" value="CAY70318.1"/>
    <property type="molecule type" value="Genomic_DNA"/>
</dbReference>
<dbReference type="RefSeq" id="XP_002492497.1">
    <property type="nucleotide sequence ID" value="XM_002492452.1"/>
</dbReference>
<dbReference type="SMR" id="C4R432"/>
<dbReference type="FunCoup" id="C4R432">
    <property type="interactions" value="62"/>
</dbReference>
<dbReference type="STRING" id="644223.C4R432"/>
<dbReference type="EnsemblFungi" id="CAY70318">
    <property type="protein sequence ID" value="CAY70318"/>
    <property type="gene ID" value="PAS_chr3_0279"/>
</dbReference>
<dbReference type="GeneID" id="8200107"/>
<dbReference type="KEGG" id="ppa:PAS_chr3_0279"/>
<dbReference type="eggNOG" id="KOG2203">
    <property type="taxonomic scope" value="Eukaryota"/>
</dbReference>
<dbReference type="HOGENOM" id="CLU_011270_0_0_1"/>
<dbReference type="InParanoid" id="C4R432"/>
<dbReference type="OMA" id="PIIKMTE"/>
<dbReference type="OrthoDB" id="1597724at2759"/>
<dbReference type="Proteomes" id="UP000000314">
    <property type="component" value="Chromosome 3"/>
</dbReference>
<dbReference type="GO" id="GO:0005789">
    <property type="term" value="C:endoplasmic reticulum membrane"/>
    <property type="evidence" value="ECO:0007669"/>
    <property type="project" value="UniProtKB-SubCell"/>
</dbReference>
<dbReference type="GO" id="GO:0005525">
    <property type="term" value="F:GTP binding"/>
    <property type="evidence" value="ECO:0007669"/>
    <property type="project" value="UniProtKB-UniRule"/>
</dbReference>
<dbReference type="GO" id="GO:0003924">
    <property type="term" value="F:GTPase activity"/>
    <property type="evidence" value="ECO:0007669"/>
    <property type="project" value="UniProtKB-UniRule"/>
</dbReference>
<dbReference type="GO" id="GO:0016320">
    <property type="term" value="P:endoplasmic reticulum membrane fusion"/>
    <property type="evidence" value="ECO:0007669"/>
    <property type="project" value="TreeGrafter"/>
</dbReference>
<dbReference type="CDD" id="cd01851">
    <property type="entry name" value="GBP"/>
    <property type="match status" value="1"/>
</dbReference>
<dbReference type="FunFam" id="3.40.50.300:FF:000727">
    <property type="entry name" value="Protein SEY1 homolog"/>
    <property type="match status" value="1"/>
</dbReference>
<dbReference type="Gene3D" id="3.40.50.300">
    <property type="entry name" value="P-loop containing nucleotide triphosphate hydrolases"/>
    <property type="match status" value="1"/>
</dbReference>
<dbReference type="HAMAP" id="MF_03109">
    <property type="entry name" value="Sey1"/>
    <property type="match status" value="1"/>
</dbReference>
<dbReference type="InterPro" id="IPR030386">
    <property type="entry name" value="G_GB1_RHD3_dom"/>
</dbReference>
<dbReference type="InterPro" id="IPR027417">
    <property type="entry name" value="P-loop_NTPase"/>
</dbReference>
<dbReference type="InterPro" id="IPR008803">
    <property type="entry name" value="RHD3/Sey1"/>
</dbReference>
<dbReference type="InterPro" id="IPR046758">
    <property type="entry name" value="Sey1/RHD3-like_3HB"/>
</dbReference>
<dbReference type="PANTHER" id="PTHR45923">
    <property type="entry name" value="PROTEIN SEY1"/>
    <property type="match status" value="1"/>
</dbReference>
<dbReference type="PANTHER" id="PTHR45923:SF2">
    <property type="entry name" value="PROTEIN SEY1"/>
    <property type="match status" value="1"/>
</dbReference>
<dbReference type="Pfam" id="PF05879">
    <property type="entry name" value="RHD3_GTPase"/>
    <property type="match status" value="1"/>
</dbReference>
<dbReference type="Pfam" id="PF20428">
    <property type="entry name" value="Sey1_3HB"/>
    <property type="match status" value="1"/>
</dbReference>
<dbReference type="SUPFAM" id="SSF52540">
    <property type="entry name" value="P-loop containing nucleoside triphosphate hydrolases"/>
    <property type="match status" value="1"/>
</dbReference>
<dbReference type="PROSITE" id="PS51715">
    <property type="entry name" value="G_GB1_RHD3"/>
    <property type="match status" value="1"/>
</dbReference>
<gene>
    <name evidence="1" type="primary">SEY1</name>
    <name type="ordered locus">PAS_chr3_0279</name>
</gene>
<comment type="function">
    <text evidence="1">Cooperates with the reticulon proteins and tubule-shaping DP1 family proteins to generate and maintain the structure of the tubular endoplasmic reticulum network. Has GTPase activity, which is required for its function in ER organization.</text>
</comment>
<comment type="subcellular location">
    <subcellularLocation>
        <location evidence="1">Endoplasmic reticulum membrane</location>
        <topology evidence="1">Multi-pass membrane protein</topology>
    </subcellularLocation>
    <text evidence="1">Enriched in the cortical ER. Concentrated in punctae along the ER tubules.</text>
</comment>
<comment type="similarity">
    <text evidence="2">Belongs to the TRAFAC class dynamin-like GTPase superfamily. GB1/RHD3 GTPase family. RHD3 subfamily.</text>
</comment>
<organism>
    <name type="scientific">Komagataella phaffii (strain GS115 / ATCC 20864)</name>
    <name type="common">Yeast</name>
    <name type="synonym">Pichia pastoris</name>
    <dbReference type="NCBI Taxonomy" id="644223"/>
    <lineage>
        <taxon>Eukaryota</taxon>
        <taxon>Fungi</taxon>
        <taxon>Dikarya</taxon>
        <taxon>Ascomycota</taxon>
        <taxon>Saccharomycotina</taxon>
        <taxon>Pichiomycetes</taxon>
        <taxon>Pichiales</taxon>
        <taxon>Pichiaceae</taxon>
        <taxon>Komagataella</taxon>
    </lineage>
</organism>
<proteinExistence type="inferred from homology"/>
<reference key="1">
    <citation type="journal article" date="2009" name="Nat. Biotechnol.">
        <title>Genome sequence of the recombinant protein production host Pichia pastoris.</title>
        <authorList>
            <person name="De Schutter K."/>
            <person name="Lin Y.-C."/>
            <person name="Tiels P."/>
            <person name="Van Hecke A."/>
            <person name="Glinka S."/>
            <person name="Weber-Lehmann J."/>
            <person name="Rouze P."/>
            <person name="Van de Peer Y."/>
            <person name="Callewaert N."/>
        </authorList>
    </citation>
    <scope>NUCLEOTIDE SEQUENCE [LARGE SCALE GENOMIC DNA]</scope>
    <source>
        <strain>GS115 / ATCC 20864</strain>
    </source>
</reference>
<protein>
    <recommendedName>
        <fullName evidence="1">Protein SEY1</fullName>
        <ecNumber evidence="1">3.6.5.-</ecNumber>
    </recommendedName>
</protein>
<evidence type="ECO:0000255" key="1">
    <source>
        <dbReference type="HAMAP-Rule" id="MF_03109"/>
    </source>
</evidence>
<evidence type="ECO:0000255" key="2">
    <source>
        <dbReference type="PROSITE-ProRule" id="PRU01052"/>
    </source>
</evidence>
<feature type="chain" id="PRO_0000384996" description="Protein SEY1">
    <location>
        <begin position="1"/>
        <end position="785"/>
    </location>
</feature>
<feature type="topological domain" description="Cytoplasmic" evidence="1">
    <location>
        <begin position="1"/>
        <end position="690"/>
    </location>
</feature>
<feature type="transmembrane region" description="Helical" evidence="1">
    <location>
        <begin position="691"/>
        <end position="711"/>
    </location>
</feature>
<feature type="topological domain" description="Lumenal" evidence="1">
    <location>
        <begin position="712"/>
        <end position="714"/>
    </location>
</feature>
<feature type="transmembrane region" description="Helical" evidence="1">
    <location>
        <begin position="715"/>
        <end position="735"/>
    </location>
</feature>
<feature type="topological domain" description="Cytoplasmic" evidence="1">
    <location>
        <begin position="736"/>
        <end position="785"/>
    </location>
</feature>
<feature type="domain" description="GB1/RHD3-type G" evidence="2">
    <location>
        <begin position="40"/>
        <end position="266"/>
    </location>
</feature>
<feature type="coiled-coil region" evidence="1">
    <location>
        <begin position="451"/>
        <end position="479"/>
    </location>
</feature>
<feature type="binding site" evidence="1">
    <location>
        <begin position="50"/>
        <end position="57"/>
    </location>
    <ligand>
        <name>GTP</name>
        <dbReference type="ChEBI" id="CHEBI:37565"/>
    </ligand>
</feature>
<keyword id="KW-0175">Coiled coil</keyword>
<keyword id="KW-0256">Endoplasmic reticulum</keyword>
<keyword id="KW-0342">GTP-binding</keyword>
<keyword id="KW-0378">Hydrolase</keyword>
<keyword id="KW-0472">Membrane</keyword>
<keyword id="KW-0547">Nucleotide-binding</keyword>
<keyword id="KW-1185">Reference proteome</keyword>
<keyword id="KW-0812">Transmembrane</keyword>
<keyword id="KW-1133">Transmembrane helix</keyword>
<sequence length="785" mass="90507">MTDLEVSAIQVIDENKVFNSLLVDYMKQFYSQNNSSDDKGLNYHIVSVFGSQSTGKSTLLNHLFHTKFDVMDESQRQQTTKGIWLAHANHISSSNESGDFANNTKNVFVMDVEGTDGRERGEDQDFERKAALFALSTSEILIINIWEHQVGLYQGANLGLLRTVFEVNLSLFAKNKQRCLLLFVIRDHVGNTSLESLSDVLTLDLQNIWSQLNKPQGTEGFELDDFFDLKFVALAHKLLQPDKFIEDISVLGDKFISEDQLFNEGYHRAIPIDGWSMYAEQVWEQIETNQDLDLPTQQILVARFRCDEISSQVYESFHEQFVKSNWDDLSFTEIGNSLKELRQNAVQQYDILAGRYSESVYLQRKKLLVQKVDLSILEVYTSVLQKLIRQSRDLYLKQIESSLTKKEAGIIFYQVLDNAERESLKYFNENTSLISFVDVDDSEARSYDPSPKLRELEEELSNLRTELVNKEQENIKTKIPRKFKSHFKLIVQDELSNIKPSSWEELLDQFRQVSEKLLAKYKSPDSNYDFHLGLSKEKNKELHEQVLIKFWIKFKEILNDFVTETNVLRLLVSKFEDEFRYDEEGLPVVWKNSAEIDVKFAKARNSALDLLPLFSLAHTAEGEILPDYDIAHDEAEAESDNEEDDGFKESHKFAHLLSARDQDAIRNKFKKQTDALYVETKRSVINSKTEVPLYIYALLLVLGWNEFMIILRNPLLITLLLIGLTGLYLGYKTKLLGPIVQVVQAMIQELQDQAKNKLRDVLVSEPEAPSQVRIGKEVDATKDED</sequence>